<sequence>MDITKNIVTLLLVVLFPILFYYNNVLAFPASDQSIYARCIGPCPRYAVPHWCENECLSRKYMAGGECAFIEGEGPTPRCCCINL</sequence>
<comment type="subcellular location">
    <subcellularLocation>
        <location evidence="1">Secreted</location>
    </subcellularLocation>
</comment>
<comment type="similarity">
    <text evidence="3">Belongs to the DEFL family.</text>
</comment>
<keyword id="KW-0929">Antimicrobial</keyword>
<keyword id="KW-1015">Disulfide bond</keyword>
<keyword id="KW-0295">Fungicide</keyword>
<keyword id="KW-0611">Plant defense</keyword>
<keyword id="KW-1185">Reference proteome</keyword>
<keyword id="KW-0964">Secreted</keyword>
<keyword id="KW-0732">Signal</keyword>
<evidence type="ECO:0000250" key="1"/>
<evidence type="ECO:0000255" key="2"/>
<evidence type="ECO:0000305" key="3"/>
<accession>Q2V337</accession>
<organism>
    <name type="scientific">Arabidopsis thaliana</name>
    <name type="common">Mouse-ear cress</name>
    <dbReference type="NCBI Taxonomy" id="3702"/>
    <lineage>
        <taxon>Eukaryota</taxon>
        <taxon>Viridiplantae</taxon>
        <taxon>Streptophyta</taxon>
        <taxon>Embryophyta</taxon>
        <taxon>Tracheophyta</taxon>
        <taxon>Spermatophyta</taxon>
        <taxon>Magnoliopsida</taxon>
        <taxon>eudicotyledons</taxon>
        <taxon>Gunneridae</taxon>
        <taxon>Pentapetalae</taxon>
        <taxon>rosids</taxon>
        <taxon>malvids</taxon>
        <taxon>Brassicales</taxon>
        <taxon>Brassicaceae</taxon>
        <taxon>Camelineae</taxon>
        <taxon>Arabidopsis</taxon>
    </lineage>
</organism>
<protein>
    <recommendedName>
        <fullName>Putative defensin-like protein 101</fullName>
    </recommendedName>
</protein>
<proteinExistence type="inferred from homology"/>
<dbReference type="EMBL" id="AF296835">
    <property type="status" value="NOT_ANNOTATED_CDS"/>
    <property type="molecule type" value="Genomic_DNA"/>
</dbReference>
<dbReference type="EMBL" id="CP002688">
    <property type="protein sequence ID" value="AED93784.1"/>
    <property type="molecule type" value="Genomic_DNA"/>
</dbReference>
<dbReference type="RefSeq" id="NP_001031961.1">
    <property type="nucleotide sequence ID" value="NM_001036884.1"/>
</dbReference>
<dbReference type="SMR" id="Q2V337"/>
<dbReference type="STRING" id="3702.Q2V337"/>
<dbReference type="GlyGen" id="Q2V337">
    <property type="glycosylation" value="1 site"/>
</dbReference>
<dbReference type="PaxDb" id="3702-AT5G28288.1"/>
<dbReference type="ProteomicsDB" id="224137"/>
<dbReference type="EnsemblPlants" id="AT5G28288.1">
    <property type="protein sequence ID" value="AT5G28288.1"/>
    <property type="gene ID" value="AT5G28288"/>
</dbReference>
<dbReference type="GeneID" id="3770787"/>
<dbReference type="Gramene" id="AT5G28288.1">
    <property type="protein sequence ID" value="AT5G28288.1"/>
    <property type="gene ID" value="AT5G28288"/>
</dbReference>
<dbReference type="KEGG" id="ath:AT5G28288"/>
<dbReference type="Araport" id="AT5G28288"/>
<dbReference type="TAIR" id="AT5G28288"/>
<dbReference type="HOGENOM" id="CLU_165205_0_0_1"/>
<dbReference type="InParanoid" id="Q2V337"/>
<dbReference type="PhylomeDB" id="Q2V337"/>
<dbReference type="PRO" id="PR:Q2V337"/>
<dbReference type="Proteomes" id="UP000006548">
    <property type="component" value="Chromosome 5"/>
</dbReference>
<dbReference type="ExpressionAtlas" id="Q2V337">
    <property type="expression patterns" value="baseline and differential"/>
</dbReference>
<dbReference type="GO" id="GO:0005576">
    <property type="term" value="C:extracellular region"/>
    <property type="evidence" value="ECO:0007669"/>
    <property type="project" value="UniProtKB-SubCell"/>
</dbReference>
<dbReference type="GO" id="GO:0050832">
    <property type="term" value="P:defense response to fungus"/>
    <property type="evidence" value="ECO:0007669"/>
    <property type="project" value="UniProtKB-KW"/>
</dbReference>
<dbReference type="GO" id="GO:0031640">
    <property type="term" value="P:killing of cells of another organism"/>
    <property type="evidence" value="ECO:0007669"/>
    <property type="project" value="UniProtKB-KW"/>
</dbReference>
<name>DF101_ARATH</name>
<gene>
    <name type="ordered locus">At5g28288</name>
    <name type="ORF">T8M17</name>
</gene>
<feature type="signal peptide" evidence="2">
    <location>
        <begin position="1"/>
        <end position="27"/>
    </location>
</feature>
<feature type="chain" id="PRO_0000379664" description="Putative defensin-like protein 101">
    <location>
        <begin position="28"/>
        <end position="84"/>
    </location>
</feature>
<feature type="disulfide bond" evidence="1">
    <location>
        <begin position="39"/>
        <end position="81"/>
    </location>
</feature>
<feature type="disulfide bond" evidence="1">
    <location>
        <begin position="43"/>
        <end position="67"/>
    </location>
</feature>
<feature type="disulfide bond" evidence="1">
    <location>
        <begin position="52"/>
        <end position="79"/>
    </location>
</feature>
<feature type="disulfide bond" evidence="1">
    <location>
        <begin position="56"/>
        <end position="80"/>
    </location>
</feature>
<reference key="1">
    <citation type="journal article" date="2000" name="Nature">
        <title>Sequence and analysis of chromosome 5 of the plant Arabidopsis thaliana.</title>
        <authorList>
            <person name="Tabata S."/>
            <person name="Kaneko T."/>
            <person name="Nakamura Y."/>
            <person name="Kotani H."/>
            <person name="Kato T."/>
            <person name="Asamizu E."/>
            <person name="Miyajima N."/>
            <person name="Sasamoto S."/>
            <person name="Kimura T."/>
            <person name="Hosouchi T."/>
            <person name="Kawashima K."/>
            <person name="Kohara M."/>
            <person name="Matsumoto M."/>
            <person name="Matsuno A."/>
            <person name="Muraki A."/>
            <person name="Nakayama S."/>
            <person name="Nakazaki N."/>
            <person name="Naruo K."/>
            <person name="Okumura S."/>
            <person name="Shinpo S."/>
            <person name="Takeuchi C."/>
            <person name="Wada T."/>
            <person name="Watanabe A."/>
            <person name="Yamada M."/>
            <person name="Yasuda M."/>
            <person name="Sato S."/>
            <person name="de la Bastide M."/>
            <person name="Huang E."/>
            <person name="Spiegel L."/>
            <person name="Gnoj L."/>
            <person name="O'Shaughnessy A."/>
            <person name="Preston R."/>
            <person name="Habermann K."/>
            <person name="Murray J."/>
            <person name="Johnson D."/>
            <person name="Rohlfing T."/>
            <person name="Nelson J."/>
            <person name="Stoneking T."/>
            <person name="Pepin K."/>
            <person name="Spieth J."/>
            <person name="Sekhon M."/>
            <person name="Armstrong J."/>
            <person name="Becker M."/>
            <person name="Belter E."/>
            <person name="Cordum H."/>
            <person name="Cordes M."/>
            <person name="Courtney L."/>
            <person name="Courtney W."/>
            <person name="Dante M."/>
            <person name="Du H."/>
            <person name="Edwards J."/>
            <person name="Fryman J."/>
            <person name="Haakensen B."/>
            <person name="Lamar E."/>
            <person name="Latreille P."/>
            <person name="Leonard S."/>
            <person name="Meyer R."/>
            <person name="Mulvaney E."/>
            <person name="Ozersky P."/>
            <person name="Riley A."/>
            <person name="Strowmatt C."/>
            <person name="Wagner-McPherson C."/>
            <person name="Wollam A."/>
            <person name="Yoakum M."/>
            <person name="Bell M."/>
            <person name="Dedhia N."/>
            <person name="Parnell L."/>
            <person name="Shah R."/>
            <person name="Rodriguez M."/>
            <person name="Hoon See L."/>
            <person name="Vil D."/>
            <person name="Baker J."/>
            <person name="Kirchoff K."/>
            <person name="Toth K."/>
            <person name="King L."/>
            <person name="Bahret A."/>
            <person name="Miller B."/>
            <person name="Marra M.A."/>
            <person name="Martienssen R."/>
            <person name="McCombie W.R."/>
            <person name="Wilson R.K."/>
            <person name="Murphy G."/>
            <person name="Bancroft I."/>
            <person name="Volckaert G."/>
            <person name="Wambutt R."/>
            <person name="Duesterhoeft A."/>
            <person name="Stiekema W."/>
            <person name="Pohl T."/>
            <person name="Entian K.-D."/>
            <person name="Terryn N."/>
            <person name="Hartley N."/>
            <person name="Bent E."/>
            <person name="Johnson S."/>
            <person name="Langham S.-A."/>
            <person name="McCullagh B."/>
            <person name="Robben J."/>
            <person name="Grymonprez B."/>
            <person name="Zimmermann W."/>
            <person name="Ramsperger U."/>
            <person name="Wedler H."/>
            <person name="Balke K."/>
            <person name="Wedler E."/>
            <person name="Peters S."/>
            <person name="van Staveren M."/>
            <person name="Dirkse W."/>
            <person name="Mooijman P."/>
            <person name="Klein Lankhorst R."/>
            <person name="Weitzenegger T."/>
            <person name="Bothe G."/>
            <person name="Rose M."/>
            <person name="Hauf J."/>
            <person name="Berneiser S."/>
            <person name="Hempel S."/>
            <person name="Feldpausch M."/>
            <person name="Lamberth S."/>
            <person name="Villarroel R."/>
            <person name="Gielen J."/>
            <person name="Ardiles W."/>
            <person name="Bents O."/>
            <person name="Lemcke K."/>
            <person name="Kolesov G."/>
            <person name="Mayer K.F.X."/>
            <person name="Rudd S."/>
            <person name="Schoof H."/>
            <person name="Schueller C."/>
            <person name="Zaccaria P."/>
            <person name="Mewes H.-W."/>
            <person name="Bevan M."/>
            <person name="Fransz P.F."/>
        </authorList>
    </citation>
    <scope>NUCLEOTIDE SEQUENCE [LARGE SCALE GENOMIC DNA]</scope>
    <source>
        <strain>cv. Columbia</strain>
    </source>
</reference>
<reference key="2">
    <citation type="journal article" date="2017" name="Plant J.">
        <title>Araport11: a complete reannotation of the Arabidopsis thaliana reference genome.</title>
        <authorList>
            <person name="Cheng C.Y."/>
            <person name="Krishnakumar V."/>
            <person name="Chan A.P."/>
            <person name="Thibaud-Nissen F."/>
            <person name="Schobel S."/>
            <person name="Town C.D."/>
        </authorList>
    </citation>
    <scope>GENOME REANNOTATION</scope>
    <source>
        <strain>cv. Columbia</strain>
    </source>
</reference>
<reference key="3">
    <citation type="journal article" date="2005" name="Plant Physiol.">
        <title>Genome organization of more than 300 defensin-like genes in Arabidopsis.</title>
        <authorList>
            <person name="Silverstein K.A.T."/>
            <person name="Graham M.A."/>
            <person name="Paape T.D."/>
            <person name="VandenBosch K.A."/>
        </authorList>
    </citation>
    <scope>GENE FAMILY</scope>
</reference>